<feature type="chain" id="PRO_0000454280" description="Propanal dehydrogenase (CoA-propanoylating)">
    <location>
        <begin position="1"/>
        <end position="464"/>
    </location>
</feature>
<feature type="region of interest" description="Targets protein to the BMC" evidence="6">
    <location>
        <begin position="1"/>
        <end position="18"/>
    </location>
</feature>
<feature type="mutagenesis site" description="Much less protein associates with BMCs, no effect on enzyme activity." evidence="6">
    <location>
        <begin position="1"/>
        <end position="14"/>
    </location>
</feature>
<feature type="mutagenesis site" description="Much less protein associates with BMCs, no effect on enzyme activity." evidence="6">
    <location>
        <begin position="1"/>
        <end position="10"/>
    </location>
</feature>
<feature type="mutagenesis site" description="No longer interacts with PduA." evidence="7">
    <location>
        <begin position="2"/>
        <end position="18"/>
    </location>
</feature>
<feature type="mutagenesis site" description="Substantially decreased protein levels in BMCs, no change in enzyme activity." evidence="7">
    <original>E</original>
    <variation>A</variation>
    <location>
        <position position="7"/>
    </location>
</feature>
<feature type="mutagenesis site" description="Substantially decreased protein levels in BMCs, no change in enzyme activity." evidence="7">
    <original>I</original>
    <variation>A</variation>
    <location>
        <position position="10"/>
    </location>
</feature>
<feature type="mutagenesis site" description="Substantially decreased protein levels in BMCs, no change in enzyme activity." evidence="7">
    <original>L</original>
    <variation>A</variation>
    <location>
        <position position="14"/>
    </location>
</feature>
<protein>
    <recommendedName>
        <fullName>Propanal dehydrogenase (CoA-propanoylating)</fullName>
        <ecNumber evidence="4">1.2.1.87</ecNumber>
    </recommendedName>
    <alternativeName>
        <fullName evidence="12">Coenzyme-A-acylating propionaldehyde dehydrogenase</fullName>
    </alternativeName>
    <alternativeName>
        <fullName>Propanediol utilization protein PduP</fullName>
    </alternativeName>
</protein>
<comment type="function">
    <text evidence="4 6 7 8 9 16">A CoA-acylating aldehyde dehydrogenase required for optimal 1,2-propanediol (1,2-PD) degradation (PubMed:14504694, PubMed:20308536). Optimizes growth in the bacterial microcompartment (BMC) dedicated to 1,2-PD degradation by minimizing propionaldehyde toxicity (Probable). Directly targeted to the BMC (PubMed:20308536, PubMed:22927404, PubMed:26283792). NAD(+) and NADH are regenerated internally within the Pdu BMC by the PduP and PduQ enzymes, which reduce NAD(+) and oxidize NADH respectively, although there must also be cofactor transport across the BMC (PubMed:23077559).</text>
</comment>
<comment type="function">
    <text evidence="18">The 1,2-PD-specific bacterial microcompartment (BMC) concentrates low levels of 1,2-PD catabolic enzymes, concentrates volatile reaction intermediates thus enhancing pathway flux and keeps the level of toxic, mutagenic propionaldehyde low.</text>
</comment>
<comment type="catalytic activity">
    <reaction evidence="4">
        <text>propanal + NAD(+) + CoA = propanoyl-CoA + NADH + H(+)</text>
        <dbReference type="Rhea" id="RHEA:36027"/>
        <dbReference type="ChEBI" id="CHEBI:15378"/>
        <dbReference type="ChEBI" id="CHEBI:17153"/>
        <dbReference type="ChEBI" id="CHEBI:57287"/>
        <dbReference type="ChEBI" id="CHEBI:57392"/>
        <dbReference type="ChEBI" id="CHEBI:57540"/>
        <dbReference type="ChEBI" id="CHEBI:57945"/>
        <dbReference type="EC" id="1.2.1.87"/>
    </reaction>
</comment>
<comment type="pathway">
    <text evidence="14">Polyol metabolism; 1,2-propanediol degradation.</text>
</comment>
<comment type="subunit">
    <text evidence="1 7 8">Interacts with BMC shell proteins PduA and PduJ, which target this protein to BMC (PubMed:22927404). Interacts with PduQ, probably via the N-terminus of PduQ (PubMed:23077559). Interacts with PduK, probably with its BMC-containing N-terminus (By similarity).</text>
</comment>
<comment type="subcellular location">
    <subcellularLocation>
        <location evidence="4 6 9 10 15 17">Bacterial microcompartment</location>
    </subcellularLocation>
    <text evidence="16">Probably located inside the BMC shell.</text>
</comment>
<comment type="induction">
    <text evidence="2">BMC production is induced by growth on 1,2-PD vitamin B12 medium.</text>
</comment>
<comment type="domain">
    <text evidence="6 7 9">A short N-terminal, probably helical sequence targets this enzyme and foreign proteins (tested with GST, MBP and eGFP) to the BMC. 10 residues give poor localization while 14 is better and 18 is better yet. The cargo is only detected by Western blot in broken shells, strongly suggesting this protein is normally found inside the BMC and not on its exterior (PubMed:20308536, PubMed:22927404, PubMed:26283792). This N-terminal sequence interacts with the C-terminus of PduA, and possibly also with PduJ, to encapsulate PduP into BMCs (PubMed:22927404). PduD and PduP compete for encapsulation in BMCs (PubMed:26283792).</text>
</comment>
<comment type="disruption phenotype">
    <text evidence="4 5">Significantly impaired for growth on 1,2-PD/CN-B12, loss of propionaldehyde dehydrogenase activity (PubMed:14504694). Releases decreased amounts of acetaldehyde when grown on propanediol (PubMed:16585748).</text>
</comment>
<comment type="miscellaneous">
    <text evidence="2 3">Bacterial microcompartments (BMC) 100-200 nm in cross section are formed during aerobic growth on minimal 1,2-PD-B12 or anaerobic growth on 1,2-PD-tetrathionate medium, but not during aerobic growth on glucose, anerobic growth on glucose or pyruvate-tetrathionate (PubMed:10498708). BMCs can constitute up to 10% of total cell protein (PubMed:12923081).</text>
</comment>
<comment type="similarity">
    <text evidence="13">Belongs to the EutE/PduP family.</text>
</comment>
<evidence type="ECO:0000250" key="1">
    <source>
        <dbReference type="UniProtKB" id="B1VB75"/>
    </source>
</evidence>
<evidence type="ECO:0000269" key="2">
    <source>
    </source>
</evidence>
<evidence type="ECO:0000269" key="3">
    <source>
    </source>
</evidence>
<evidence type="ECO:0000269" key="4">
    <source>
    </source>
</evidence>
<evidence type="ECO:0000269" key="5">
    <source>
    </source>
</evidence>
<evidence type="ECO:0000269" key="6">
    <source>
    </source>
</evidence>
<evidence type="ECO:0000269" key="7">
    <source>
    </source>
</evidence>
<evidence type="ECO:0000269" key="8">
    <source>
    </source>
</evidence>
<evidence type="ECO:0000269" key="9">
    <source>
    </source>
</evidence>
<evidence type="ECO:0000269" key="10">
    <source>
    </source>
</evidence>
<evidence type="ECO:0000303" key="11">
    <source>
    </source>
</evidence>
<evidence type="ECO:0000303" key="12">
    <source>
    </source>
</evidence>
<evidence type="ECO:0000305" key="13"/>
<evidence type="ECO:0000305" key="14">
    <source>
    </source>
</evidence>
<evidence type="ECO:0000305" key="15">
    <source>
    </source>
</evidence>
<evidence type="ECO:0000305" key="16">
    <source>
    </source>
</evidence>
<evidence type="ECO:0000305" key="17">
    <source>
    </source>
</evidence>
<evidence type="ECO:0000305" key="18">
    <source>
    </source>
</evidence>
<dbReference type="EC" id="1.2.1.87" evidence="4"/>
<dbReference type="EMBL" id="AF026270">
    <property type="protein sequence ID" value="AAD39015.1"/>
    <property type="molecule type" value="Genomic_DNA"/>
</dbReference>
<dbReference type="EMBL" id="AE006468">
    <property type="protein sequence ID" value="AAL20955.1"/>
    <property type="molecule type" value="Genomic_DNA"/>
</dbReference>
<dbReference type="RefSeq" id="NP_460996.1">
    <property type="nucleotide sequence ID" value="NC_003197.2"/>
</dbReference>
<dbReference type="RefSeq" id="WP_001097680.1">
    <property type="nucleotide sequence ID" value="NC_003197.2"/>
</dbReference>
<dbReference type="SMR" id="Q9XDN1"/>
<dbReference type="STRING" id="99287.STM2051"/>
<dbReference type="PaxDb" id="99287-STM2051"/>
<dbReference type="GeneID" id="1253572"/>
<dbReference type="KEGG" id="stm:STM2051"/>
<dbReference type="PATRIC" id="fig|99287.12.peg.2173"/>
<dbReference type="HOGENOM" id="CLU_028794_1_0_6"/>
<dbReference type="OMA" id="TCEQLMP"/>
<dbReference type="PhylomeDB" id="Q9XDN1"/>
<dbReference type="BioCyc" id="MetaCyc:STM2051-MONOMER"/>
<dbReference type="BioCyc" id="SENT99287:STM2051-MONOMER"/>
<dbReference type="UniPathway" id="UPA00621"/>
<dbReference type="Proteomes" id="UP000001014">
    <property type="component" value="Chromosome"/>
</dbReference>
<dbReference type="GO" id="GO:0031472">
    <property type="term" value="C:propanediol degradation polyhedral organelle"/>
    <property type="evidence" value="ECO:0000314"/>
    <property type="project" value="UniProtKB"/>
</dbReference>
<dbReference type="GO" id="GO:0008774">
    <property type="term" value="F:acetaldehyde dehydrogenase (acetylating) activity"/>
    <property type="evidence" value="ECO:0007669"/>
    <property type="project" value="InterPro"/>
</dbReference>
<dbReference type="GO" id="GO:0051144">
    <property type="term" value="P:propanediol catabolic process"/>
    <property type="evidence" value="ECO:0007669"/>
    <property type="project" value="UniProtKB-UniPathway"/>
</dbReference>
<dbReference type="CDD" id="cd07121">
    <property type="entry name" value="ALDH_EutE"/>
    <property type="match status" value="1"/>
</dbReference>
<dbReference type="Gene3D" id="3.40.605.10">
    <property type="entry name" value="Aldehyde Dehydrogenase, Chain A, domain 1"/>
    <property type="match status" value="1"/>
</dbReference>
<dbReference type="Gene3D" id="3.40.309.10">
    <property type="entry name" value="Aldehyde Dehydrogenase, Chain A, domain 2"/>
    <property type="match status" value="1"/>
</dbReference>
<dbReference type="InterPro" id="IPR012408">
    <property type="entry name" value="Acetald_propionald_DH-rel"/>
</dbReference>
<dbReference type="InterPro" id="IPR016161">
    <property type="entry name" value="Ald_DH/histidinol_DH"/>
</dbReference>
<dbReference type="InterPro" id="IPR016163">
    <property type="entry name" value="Ald_DH_C"/>
</dbReference>
<dbReference type="InterPro" id="IPR016162">
    <property type="entry name" value="Ald_DH_N"/>
</dbReference>
<dbReference type="InterPro" id="IPR015590">
    <property type="entry name" value="Aldehyde_DH_dom"/>
</dbReference>
<dbReference type="NCBIfam" id="NF011927">
    <property type="entry name" value="PRK15398.1"/>
    <property type="match status" value="1"/>
</dbReference>
<dbReference type="PANTHER" id="PTHR11699">
    <property type="entry name" value="ALDEHYDE DEHYDROGENASE-RELATED"/>
    <property type="match status" value="1"/>
</dbReference>
<dbReference type="Pfam" id="PF00171">
    <property type="entry name" value="Aldedh"/>
    <property type="match status" value="1"/>
</dbReference>
<dbReference type="PIRSF" id="PIRSF036410">
    <property type="entry name" value="EutE_PduP"/>
    <property type="match status" value="1"/>
</dbReference>
<dbReference type="SUPFAM" id="SSF53720">
    <property type="entry name" value="ALDH-like"/>
    <property type="match status" value="1"/>
</dbReference>
<gene>
    <name evidence="11" type="primary">pduP</name>
    <name type="ordered locus">STM2051</name>
</gene>
<keyword id="KW-1283">Bacterial microcompartment</keyword>
<keyword id="KW-0520">NAD</keyword>
<keyword id="KW-0560">Oxidoreductase</keyword>
<keyword id="KW-1185">Reference proteome</keyword>
<name>PDUP_SALTY</name>
<accession>Q9XDN1</accession>
<accession>Q7BV76</accession>
<organism>
    <name type="scientific">Salmonella typhimurium (strain LT2 / SGSC1412 / ATCC 700720)</name>
    <dbReference type="NCBI Taxonomy" id="99287"/>
    <lineage>
        <taxon>Bacteria</taxon>
        <taxon>Pseudomonadati</taxon>
        <taxon>Pseudomonadota</taxon>
        <taxon>Gammaproteobacteria</taxon>
        <taxon>Enterobacterales</taxon>
        <taxon>Enterobacteriaceae</taxon>
        <taxon>Salmonella</taxon>
    </lineage>
</organism>
<sequence length="464" mass="49046">MNTSELETLIRTILSEQLTTPAQTPVQPQGKGIFQSVSEAIDAAHQAFLRYQQCPLKTRSAIISAMRQELTPLLAPLAEESANETGMGNKEDKFLKNKAALDNTPGVEDLTTTALTGDGGMVLFEYSPFGVIGSVAPSTNPTETIINNSISMLAAGNSIYFSPHPGAKKVSLKLISLIEEIAFRCCGIRNLVVTVAEPTFEATQQMMAHPRIAVLAITGGPGIVAMGMKSGKKVIGAGAGNPPCIVDETADLVKAAEDIINGASFDYNLPCIAEKSLIVVESVAERLVQQMQTFGALLLSPADTDKLRAVCLPEGQANKKLVGKSPSAMLEAAGIAVPAKAPRLLIALVNADDPWVTSEQLMPMLPVVKVSDFDSALALALKVEEGLHHTAIMHSQNVSRLNLAARTLQTSIFVKNGPSYAGIGVGGEGFTTFTIATPTGEGTTSARTFARSRRCVLTNGFSIR</sequence>
<proteinExistence type="evidence at protein level"/>
<reference key="1">
    <citation type="journal article" date="1999" name="J. Bacteriol.">
        <title>The propanediol utilization (pdu) operon of Salmonella enterica serovar typhimurium LT2 includes genes necessary for formation of polyhedral organelles involved in coenzyme B(12)-dependent 1, 2-propanediol degradation.</title>
        <authorList>
            <person name="Bobik T.A."/>
            <person name="Havemann G.D."/>
            <person name="Busch R.J."/>
            <person name="Williams D.S."/>
            <person name="Aldrich H.C."/>
        </authorList>
    </citation>
    <scope>NUCLEOTIDE SEQUENCE [GENOMIC DNA]</scope>
    <scope>PATHWAY</scope>
    <scope>INDUCTION</scope>
    <source>
        <strain>LT2</strain>
    </source>
</reference>
<reference key="2">
    <citation type="journal article" date="2001" name="Nature">
        <title>Complete genome sequence of Salmonella enterica serovar Typhimurium LT2.</title>
        <authorList>
            <person name="McClelland M."/>
            <person name="Sanderson K.E."/>
            <person name="Spieth J."/>
            <person name="Clifton S.W."/>
            <person name="Latreille P."/>
            <person name="Courtney L."/>
            <person name="Porwollik S."/>
            <person name="Ali J."/>
            <person name="Dante M."/>
            <person name="Du F."/>
            <person name="Hou S."/>
            <person name="Layman D."/>
            <person name="Leonard S."/>
            <person name="Nguyen C."/>
            <person name="Scott K."/>
            <person name="Holmes A."/>
            <person name="Grewal N."/>
            <person name="Mulvaney E."/>
            <person name="Ryan E."/>
            <person name="Sun H."/>
            <person name="Florea L."/>
            <person name="Miller W."/>
            <person name="Stoneking T."/>
            <person name="Nhan M."/>
            <person name="Waterston R."/>
            <person name="Wilson R.K."/>
        </authorList>
    </citation>
    <scope>NUCLEOTIDE SEQUENCE [LARGE SCALE GENOMIC DNA]</scope>
    <source>
        <strain>LT2 / SGSC1412 / ATCC 700720</strain>
    </source>
</reference>
<reference key="3">
    <citation type="journal article" date="2003" name="J. Bacteriol.">
        <title>Protein content of polyhedral organelles involved in coenzyme B12-dependent degradation of 1,2-propanediol in Salmonella enterica serovar Typhimurium LT2.</title>
        <authorList>
            <person name="Havemann G.D."/>
            <person name="Bobik T.A."/>
        </authorList>
    </citation>
    <scope>IDENTIFICATION BY MASS SPECTROMETRY</scope>
    <scope>SUBCELLULAR LOCATION</scope>
    <source>
        <strain>LT2</strain>
    </source>
</reference>
<reference key="4">
    <citation type="journal article" date="2003" name="Arch. Microbiol.">
        <title>PduP is a coenzyme-a-acylating propionaldehyde dehydrogenase associated with the polyhedral bodies involved in B12-dependent 1,2-propanediol degradation by Salmonella enterica serovar Typhimurium LT2.</title>
        <authorList>
            <person name="Leal N.A."/>
            <person name="Havemann G.D."/>
            <person name="Bobik T.A."/>
        </authorList>
    </citation>
    <scope>FUNCTION</scope>
    <scope>CATALYTIC ACTIVITY</scope>
    <scope>SUBCELLULAR LOCATION</scope>
    <scope>DISRUPTION PHENOTYPE</scope>
    <source>
        <strain>LT2</strain>
    </source>
</reference>
<reference key="5">
    <citation type="journal article" date="2006" name="J. Bacteriol.">
        <title>Conserving a volatile metabolite: a role for carboxysome-like organelles in Salmonella enterica.</title>
        <authorList>
            <person name="Penrod J.T."/>
            <person name="Roth J.R."/>
        </authorList>
    </citation>
    <scope>DISRUPTION PHENOTYPE</scope>
    <source>
        <strain>LT2</strain>
    </source>
</reference>
<reference key="6">
    <citation type="journal article" date="2010" name="Proc. Natl. Acad. Sci. U.S.A.">
        <title>Short N-terminal sequences package proteins into bacterial microcompartments.</title>
        <authorList>
            <person name="Fan C."/>
            <person name="Cheng S."/>
            <person name="Liu Y."/>
            <person name="Escobar C.M."/>
            <person name="Crowley C.S."/>
            <person name="Jefferson R.E."/>
            <person name="Yeates T.O."/>
            <person name="Bobik T.A."/>
        </authorList>
    </citation>
    <scope>FUNCTION</scope>
    <scope>SUBCELLULAR LOCATION</scope>
    <scope>DOMAIN</scope>
    <scope>MUTAGENESIS OF 1-MET--ILE-10 AND 1-MET--LEU-14</scope>
    <source>
        <strain>LT2</strain>
    </source>
</reference>
<reference key="7">
    <citation type="journal article" date="2012" name="Proc. Natl. Acad. Sci. U.S.A.">
        <title>Interactions between the termini of lumen enzymes and shell proteins mediate enzyme encapsulation into bacterial microcompartments.</title>
        <authorList>
            <person name="Fan C."/>
            <person name="Cheng S."/>
            <person name="Sinha S."/>
            <person name="Bobik T.A."/>
        </authorList>
    </citation>
    <scope>FUNCTION</scope>
    <scope>INTERACTION WITH PDUA AND PDUJ</scope>
    <scope>DOMAIN</scope>
    <scope>MUTAGENESIS OF 2-ASN--LEU-18; GLU-7; ILE-10 AND LEU-14</scope>
    <source>
        <strain>LT2</strain>
    </source>
</reference>
<reference key="8">
    <citation type="journal article" date="2012" name="PLoS ONE">
        <title>The PduQ enzyme is an alcohol dehydrogenase used to recycle NAD+ internally within the Pdu microcompartment of Salmonella enterica.</title>
        <authorList>
            <person name="Cheng S."/>
            <person name="Fan C."/>
            <person name="Sinha S."/>
            <person name="Bobik T.A."/>
        </authorList>
    </citation>
    <scope>FUNCTION</scope>
    <scope>INTERACTION WITH PDUQ</scope>
    <scope>SUBCELLULAR LOCATION</scope>
    <source>
        <strain>LT2</strain>
    </source>
</reference>
<reference key="9">
    <citation type="journal article" date="2015" name="J. Biol. Chem.">
        <title>Localization of proteins to the 1,2-propanediol utilization microcompartment by non-native signal sequences is mediated by a common hydrophobic motif.</title>
        <authorList>
            <person name="Jakobson C.M."/>
            <person name="Kim E.Y."/>
            <person name="Slininger M.F."/>
            <person name="Chien A."/>
            <person name="Tullman-Ercek D."/>
        </authorList>
    </citation>
    <scope>FUNCTION</scope>
    <scope>SUBCELLULAR LOCATION</scope>
    <scope>DOMAIN</scope>
    <source>
        <strain>LT2</strain>
    </source>
</reference>
<reference key="10">
    <citation type="journal article" date="2016" name="Sci. Rep.">
        <title>Engineering formation of multiple recombinant Eut protein nanocompartments in E. coli.</title>
        <authorList>
            <person name="Held M."/>
            <person name="Kolb A."/>
            <person name="Perdue S."/>
            <person name="Hsu S.Y."/>
            <person name="Bloch S.E."/>
            <person name="Quin M.B."/>
            <person name="Schmidt-Dannert C."/>
        </authorList>
    </citation>
    <scope>SUBCELLULAR LOCATION</scope>
    <source>
        <strain>LT2</strain>
    </source>
</reference>
<reference key="11">
    <citation type="journal article" date="2017" name="PLoS Comput. Biol.">
        <title>A systems-level model reveals that 1,2-Propanediol utilization microcompartments enhance pathway flux through intermediate sequestration.</title>
        <authorList>
            <person name="Jakobson C.M."/>
            <person name="Tullman-Ercek D."/>
            <person name="Slininger M.F."/>
            <person name="Mangan N.M."/>
        </authorList>
    </citation>
    <scope>SYSTEM-MODELING</scope>
    <scope>FUNCTION</scope>
    <source>
        <strain>LT2</strain>
    </source>
</reference>